<feature type="signal peptide" evidence="2">
    <location>
        <begin position="1"/>
        <end position="21"/>
    </location>
</feature>
<feature type="chain" id="PRO_0000249272" description="Endoglucanase 20">
    <location>
        <begin position="22"/>
        <end position="479"/>
    </location>
</feature>
<feature type="active site" description="Nucleophile" evidence="5">
    <location>
        <position position="76"/>
    </location>
</feature>
<feature type="active site" evidence="3">
    <location>
        <position position="398"/>
    </location>
</feature>
<feature type="active site" evidence="4">
    <location>
        <position position="449"/>
    </location>
</feature>
<feature type="active site" evidence="4">
    <location>
        <position position="458"/>
    </location>
</feature>
<feature type="glycosylation site" description="N-linked (GlcNAc...) asparagine" evidence="2">
    <location>
        <position position="29"/>
    </location>
</feature>
<feature type="glycosylation site" description="N-linked (GlcNAc...) asparagine" evidence="2">
    <location>
        <position position="442"/>
    </location>
</feature>
<evidence type="ECO:0000250" key="1"/>
<evidence type="ECO:0000255" key="2"/>
<evidence type="ECO:0000255" key="3">
    <source>
        <dbReference type="PROSITE-ProRule" id="PRU10059"/>
    </source>
</evidence>
<evidence type="ECO:0000255" key="4">
    <source>
        <dbReference type="PROSITE-ProRule" id="PRU10060"/>
    </source>
</evidence>
<evidence type="ECO:0000255" key="5">
    <source>
        <dbReference type="PROSITE-ProRule" id="PRU10140"/>
    </source>
</evidence>
<evidence type="ECO:0000305" key="6"/>
<comment type="catalytic activity">
    <reaction>
        <text>Endohydrolysis of (1-&gt;4)-beta-D-glucosidic linkages in cellulose, lichenin and cereal beta-D-glucans.</text>
        <dbReference type="EC" id="3.2.1.4"/>
    </reaction>
</comment>
<comment type="subcellular location">
    <subcellularLocation>
        <location evidence="1">Secreted</location>
    </subcellularLocation>
</comment>
<comment type="similarity">
    <text evidence="5 6">Belongs to the glycosyl hydrolase 9 (cellulase E) family.</text>
</comment>
<keyword id="KW-0119">Carbohydrate metabolism</keyword>
<keyword id="KW-0961">Cell wall biogenesis/degradation</keyword>
<keyword id="KW-0136">Cellulose degradation</keyword>
<keyword id="KW-0325">Glycoprotein</keyword>
<keyword id="KW-0326">Glycosidase</keyword>
<keyword id="KW-0378">Hydrolase</keyword>
<keyword id="KW-0624">Polysaccharide degradation</keyword>
<keyword id="KW-1185">Reference proteome</keyword>
<keyword id="KW-0964">Secreted</keyword>
<keyword id="KW-0732">Signal</keyword>
<gene>
    <name type="ordered locus">At4g23560</name>
    <name type="ORF">F9D16.30</name>
</gene>
<proteinExistence type="evidence at transcript level"/>
<name>GUN20_ARATH</name>
<reference key="1">
    <citation type="journal article" date="1999" name="Nature">
        <title>Sequence and analysis of chromosome 4 of the plant Arabidopsis thaliana.</title>
        <authorList>
            <person name="Mayer K.F.X."/>
            <person name="Schueller C."/>
            <person name="Wambutt R."/>
            <person name="Murphy G."/>
            <person name="Volckaert G."/>
            <person name="Pohl T."/>
            <person name="Duesterhoeft A."/>
            <person name="Stiekema W."/>
            <person name="Entian K.-D."/>
            <person name="Terryn N."/>
            <person name="Harris B."/>
            <person name="Ansorge W."/>
            <person name="Brandt P."/>
            <person name="Grivell L.A."/>
            <person name="Rieger M."/>
            <person name="Weichselgartner M."/>
            <person name="de Simone V."/>
            <person name="Obermaier B."/>
            <person name="Mache R."/>
            <person name="Mueller M."/>
            <person name="Kreis M."/>
            <person name="Delseny M."/>
            <person name="Puigdomenech P."/>
            <person name="Watson M."/>
            <person name="Schmidtheini T."/>
            <person name="Reichert B."/>
            <person name="Portetelle D."/>
            <person name="Perez-Alonso M."/>
            <person name="Boutry M."/>
            <person name="Bancroft I."/>
            <person name="Vos P."/>
            <person name="Hoheisel J."/>
            <person name="Zimmermann W."/>
            <person name="Wedler H."/>
            <person name="Ridley P."/>
            <person name="Langham S.-A."/>
            <person name="McCullagh B."/>
            <person name="Bilham L."/>
            <person name="Robben J."/>
            <person name="van der Schueren J."/>
            <person name="Grymonprez B."/>
            <person name="Chuang Y.-J."/>
            <person name="Vandenbussche F."/>
            <person name="Braeken M."/>
            <person name="Weltjens I."/>
            <person name="Voet M."/>
            <person name="Bastiaens I."/>
            <person name="Aert R."/>
            <person name="Defoor E."/>
            <person name="Weitzenegger T."/>
            <person name="Bothe G."/>
            <person name="Ramsperger U."/>
            <person name="Hilbert H."/>
            <person name="Braun M."/>
            <person name="Holzer E."/>
            <person name="Brandt A."/>
            <person name="Peters S."/>
            <person name="van Staveren M."/>
            <person name="Dirkse W."/>
            <person name="Mooijman P."/>
            <person name="Klein Lankhorst R."/>
            <person name="Rose M."/>
            <person name="Hauf J."/>
            <person name="Koetter P."/>
            <person name="Berneiser S."/>
            <person name="Hempel S."/>
            <person name="Feldpausch M."/>
            <person name="Lamberth S."/>
            <person name="Van den Daele H."/>
            <person name="De Keyser A."/>
            <person name="Buysshaert C."/>
            <person name="Gielen J."/>
            <person name="Villarroel R."/>
            <person name="De Clercq R."/>
            <person name="van Montagu M."/>
            <person name="Rogers J."/>
            <person name="Cronin A."/>
            <person name="Quail M.A."/>
            <person name="Bray-Allen S."/>
            <person name="Clark L."/>
            <person name="Doggett J."/>
            <person name="Hall S."/>
            <person name="Kay M."/>
            <person name="Lennard N."/>
            <person name="McLay K."/>
            <person name="Mayes R."/>
            <person name="Pettett A."/>
            <person name="Rajandream M.A."/>
            <person name="Lyne M."/>
            <person name="Benes V."/>
            <person name="Rechmann S."/>
            <person name="Borkova D."/>
            <person name="Bloecker H."/>
            <person name="Scharfe M."/>
            <person name="Grimm M."/>
            <person name="Loehnert T.-H."/>
            <person name="Dose S."/>
            <person name="de Haan M."/>
            <person name="Maarse A.C."/>
            <person name="Schaefer M."/>
            <person name="Mueller-Auer S."/>
            <person name="Gabel C."/>
            <person name="Fuchs M."/>
            <person name="Fartmann B."/>
            <person name="Granderath K."/>
            <person name="Dauner D."/>
            <person name="Herzl A."/>
            <person name="Neumann S."/>
            <person name="Argiriou A."/>
            <person name="Vitale D."/>
            <person name="Liguori R."/>
            <person name="Piravandi E."/>
            <person name="Massenet O."/>
            <person name="Quigley F."/>
            <person name="Clabauld G."/>
            <person name="Muendlein A."/>
            <person name="Felber R."/>
            <person name="Schnabl S."/>
            <person name="Hiller R."/>
            <person name="Schmidt W."/>
            <person name="Lecharny A."/>
            <person name="Aubourg S."/>
            <person name="Chefdor F."/>
            <person name="Cooke R."/>
            <person name="Berger C."/>
            <person name="Monfort A."/>
            <person name="Casacuberta E."/>
            <person name="Gibbons T."/>
            <person name="Weber N."/>
            <person name="Vandenbol M."/>
            <person name="Bargues M."/>
            <person name="Terol J."/>
            <person name="Torres A."/>
            <person name="Perez-Perez A."/>
            <person name="Purnelle B."/>
            <person name="Bent E."/>
            <person name="Johnson S."/>
            <person name="Tacon D."/>
            <person name="Jesse T."/>
            <person name="Heijnen L."/>
            <person name="Schwarz S."/>
            <person name="Scholler P."/>
            <person name="Heber S."/>
            <person name="Francs P."/>
            <person name="Bielke C."/>
            <person name="Frishman D."/>
            <person name="Haase D."/>
            <person name="Lemcke K."/>
            <person name="Mewes H.-W."/>
            <person name="Stocker S."/>
            <person name="Zaccaria P."/>
            <person name="Bevan M."/>
            <person name="Wilson R.K."/>
            <person name="de la Bastide M."/>
            <person name="Habermann K."/>
            <person name="Parnell L."/>
            <person name="Dedhia N."/>
            <person name="Gnoj L."/>
            <person name="Schutz K."/>
            <person name="Huang E."/>
            <person name="Spiegel L."/>
            <person name="Sekhon M."/>
            <person name="Murray J."/>
            <person name="Sheet P."/>
            <person name="Cordes M."/>
            <person name="Abu-Threideh J."/>
            <person name="Stoneking T."/>
            <person name="Kalicki J."/>
            <person name="Graves T."/>
            <person name="Harmon G."/>
            <person name="Edwards J."/>
            <person name="Latreille P."/>
            <person name="Courtney L."/>
            <person name="Cloud J."/>
            <person name="Abbott A."/>
            <person name="Scott K."/>
            <person name="Johnson D."/>
            <person name="Minx P."/>
            <person name="Bentley D."/>
            <person name="Fulton B."/>
            <person name="Miller N."/>
            <person name="Greco T."/>
            <person name="Kemp K."/>
            <person name="Kramer J."/>
            <person name="Fulton L."/>
            <person name="Mardis E."/>
            <person name="Dante M."/>
            <person name="Pepin K."/>
            <person name="Hillier L.W."/>
            <person name="Nelson J."/>
            <person name="Spieth J."/>
            <person name="Ryan E."/>
            <person name="Andrews S."/>
            <person name="Geisel C."/>
            <person name="Layman D."/>
            <person name="Du H."/>
            <person name="Ali J."/>
            <person name="Berghoff A."/>
            <person name="Jones K."/>
            <person name="Drone K."/>
            <person name="Cotton M."/>
            <person name="Joshu C."/>
            <person name="Antonoiu B."/>
            <person name="Zidanic M."/>
            <person name="Strong C."/>
            <person name="Sun H."/>
            <person name="Lamar B."/>
            <person name="Yordan C."/>
            <person name="Ma P."/>
            <person name="Zhong J."/>
            <person name="Preston R."/>
            <person name="Vil D."/>
            <person name="Shekher M."/>
            <person name="Matero A."/>
            <person name="Shah R."/>
            <person name="Swaby I.K."/>
            <person name="O'Shaughnessy A."/>
            <person name="Rodriguez M."/>
            <person name="Hoffman J."/>
            <person name="Till S."/>
            <person name="Granat S."/>
            <person name="Shohdy N."/>
            <person name="Hasegawa A."/>
            <person name="Hameed A."/>
            <person name="Lodhi M."/>
            <person name="Johnson A."/>
            <person name="Chen E."/>
            <person name="Marra M.A."/>
            <person name="Martienssen R."/>
            <person name="McCombie W.R."/>
        </authorList>
    </citation>
    <scope>NUCLEOTIDE SEQUENCE [LARGE SCALE GENOMIC DNA]</scope>
    <source>
        <strain>cv. Columbia</strain>
    </source>
</reference>
<reference key="2">
    <citation type="journal article" date="2017" name="Plant J.">
        <title>Araport11: a complete reannotation of the Arabidopsis thaliana reference genome.</title>
        <authorList>
            <person name="Cheng C.Y."/>
            <person name="Krishnakumar V."/>
            <person name="Chan A.P."/>
            <person name="Thibaud-Nissen F."/>
            <person name="Schobel S."/>
            <person name="Town C.D."/>
        </authorList>
    </citation>
    <scope>GENOME REANNOTATION</scope>
    <source>
        <strain>cv. Columbia</strain>
    </source>
</reference>
<reference key="3">
    <citation type="journal article" date="2004" name="J. Mol. Evol.">
        <title>Phylogenetic analysis of the plant endo-beta-1,4-glucanase gene family.</title>
        <authorList>
            <person name="Libertini E."/>
            <person name="Li Y."/>
            <person name="McQueen-Mason S.J."/>
        </authorList>
    </citation>
    <scope>GENE FAMILY</scope>
</reference>
<protein>
    <recommendedName>
        <fullName>Endoglucanase 20</fullName>
        <ecNumber>3.2.1.4</ecNumber>
    </recommendedName>
    <alternativeName>
        <fullName>Endo-1,4-beta glucanase 20</fullName>
    </alternativeName>
</protein>
<organism>
    <name type="scientific">Arabidopsis thaliana</name>
    <name type="common">Mouse-ear cress</name>
    <dbReference type="NCBI Taxonomy" id="3702"/>
    <lineage>
        <taxon>Eukaryota</taxon>
        <taxon>Viridiplantae</taxon>
        <taxon>Streptophyta</taxon>
        <taxon>Embryophyta</taxon>
        <taxon>Tracheophyta</taxon>
        <taxon>Spermatophyta</taxon>
        <taxon>Magnoliopsida</taxon>
        <taxon>eudicotyledons</taxon>
        <taxon>Gunneridae</taxon>
        <taxon>Pentapetalae</taxon>
        <taxon>rosids</taxon>
        <taxon>malvids</taxon>
        <taxon>Brassicales</taxon>
        <taxon>Brassicaceae</taxon>
        <taxon>Camelineae</taxon>
        <taxon>Arabidopsis</taxon>
    </lineage>
</organism>
<dbReference type="EC" id="3.2.1.4"/>
<dbReference type="EMBL" id="AL035394">
    <property type="protein sequence ID" value="CAA23022.1"/>
    <property type="molecule type" value="Genomic_DNA"/>
</dbReference>
<dbReference type="EMBL" id="AL161559">
    <property type="protein sequence ID" value="CAB79311.1"/>
    <property type="molecule type" value="Genomic_DNA"/>
</dbReference>
<dbReference type="EMBL" id="CP002687">
    <property type="protein sequence ID" value="AEE84775.1"/>
    <property type="molecule type" value="Genomic_DNA"/>
</dbReference>
<dbReference type="PIR" id="T05588">
    <property type="entry name" value="T05588"/>
</dbReference>
<dbReference type="RefSeq" id="NP_194087.1">
    <property type="nucleotide sequence ID" value="NM_118487.4"/>
</dbReference>
<dbReference type="SMR" id="Q9SUS0"/>
<dbReference type="BioGRID" id="13745">
    <property type="interactions" value="1"/>
</dbReference>
<dbReference type="FunCoup" id="Q9SUS0">
    <property type="interactions" value="1"/>
</dbReference>
<dbReference type="STRING" id="3702.Q9SUS0"/>
<dbReference type="CAZy" id="GH9">
    <property type="family name" value="Glycoside Hydrolase Family 9"/>
</dbReference>
<dbReference type="GlyGen" id="Q9SUS0">
    <property type="glycosylation" value="3 sites"/>
</dbReference>
<dbReference type="PaxDb" id="3702-AT4G23560.1"/>
<dbReference type="ProteomicsDB" id="247270"/>
<dbReference type="EnsemblPlants" id="AT4G23560.1">
    <property type="protein sequence ID" value="AT4G23560.1"/>
    <property type="gene ID" value="AT4G23560"/>
</dbReference>
<dbReference type="GeneID" id="828456"/>
<dbReference type="Gramene" id="AT4G23560.1">
    <property type="protein sequence ID" value="AT4G23560.1"/>
    <property type="gene ID" value="AT4G23560"/>
</dbReference>
<dbReference type="KEGG" id="ath:AT4G23560"/>
<dbReference type="Araport" id="AT4G23560"/>
<dbReference type="TAIR" id="AT4G23560">
    <property type="gene designation" value="GH9B15"/>
</dbReference>
<dbReference type="eggNOG" id="ENOG502QRF6">
    <property type="taxonomic scope" value="Eukaryota"/>
</dbReference>
<dbReference type="HOGENOM" id="CLU_008926_1_0_1"/>
<dbReference type="InParanoid" id="Q9SUS0"/>
<dbReference type="OMA" id="NNQGWSQ"/>
<dbReference type="PhylomeDB" id="Q9SUS0"/>
<dbReference type="BioCyc" id="ARA:AT4G23560-MONOMER"/>
<dbReference type="PRO" id="PR:Q9SUS0"/>
<dbReference type="Proteomes" id="UP000006548">
    <property type="component" value="Chromosome 4"/>
</dbReference>
<dbReference type="ExpressionAtlas" id="Q9SUS0">
    <property type="expression patterns" value="baseline and differential"/>
</dbReference>
<dbReference type="GO" id="GO:0005576">
    <property type="term" value="C:extracellular region"/>
    <property type="evidence" value="ECO:0007669"/>
    <property type="project" value="UniProtKB-SubCell"/>
</dbReference>
<dbReference type="GO" id="GO:0008810">
    <property type="term" value="F:cellulase activity"/>
    <property type="evidence" value="ECO:0007669"/>
    <property type="project" value="UniProtKB-EC"/>
</dbReference>
<dbReference type="GO" id="GO:0071555">
    <property type="term" value="P:cell wall organization"/>
    <property type="evidence" value="ECO:0007669"/>
    <property type="project" value="UniProtKB-KW"/>
</dbReference>
<dbReference type="GO" id="GO:0030245">
    <property type="term" value="P:cellulose catabolic process"/>
    <property type="evidence" value="ECO:0007669"/>
    <property type="project" value="UniProtKB-KW"/>
</dbReference>
<dbReference type="FunFam" id="1.50.10.10:FF:000020">
    <property type="entry name" value="Endoglucanase"/>
    <property type="match status" value="1"/>
</dbReference>
<dbReference type="Gene3D" id="1.50.10.10">
    <property type="match status" value="1"/>
</dbReference>
<dbReference type="InterPro" id="IPR008928">
    <property type="entry name" value="6-hairpin_glycosidase_sf"/>
</dbReference>
<dbReference type="InterPro" id="IPR012341">
    <property type="entry name" value="6hp_glycosidase-like_sf"/>
</dbReference>
<dbReference type="InterPro" id="IPR001701">
    <property type="entry name" value="Glyco_hydro_9"/>
</dbReference>
<dbReference type="InterPro" id="IPR033126">
    <property type="entry name" value="Glyco_hydro_9_Asp/Glu_AS"/>
</dbReference>
<dbReference type="InterPro" id="IPR018221">
    <property type="entry name" value="Glyco_hydro_9_His_AS"/>
</dbReference>
<dbReference type="PANTHER" id="PTHR22298">
    <property type="entry name" value="ENDO-1,4-BETA-GLUCANASE"/>
    <property type="match status" value="1"/>
</dbReference>
<dbReference type="Pfam" id="PF00759">
    <property type="entry name" value="Glyco_hydro_9"/>
    <property type="match status" value="1"/>
</dbReference>
<dbReference type="SUPFAM" id="SSF48208">
    <property type="entry name" value="Six-hairpin glycosidases"/>
    <property type="match status" value="1"/>
</dbReference>
<dbReference type="PROSITE" id="PS60032">
    <property type="entry name" value="GH9_1"/>
    <property type="match status" value="1"/>
</dbReference>
<dbReference type="PROSITE" id="PS00592">
    <property type="entry name" value="GH9_2"/>
    <property type="match status" value="1"/>
</dbReference>
<dbReference type="PROSITE" id="PS00698">
    <property type="entry name" value="GH9_3"/>
    <property type="match status" value="1"/>
</dbReference>
<sequence length="479" mass="52450">MGKLLVLMLVGMFLAFESLEALEYGDALNKSILFFEGQRSGKLPTNQRVKWRADSALSDGSLANVNLIGGYYDAGDNVKFVWPMSFTTTLLSWAAIEYQNEISSVNQLGYLRSTIKWGTDFILRAHTSPNMLYTQVGDGNSDHSCWERPEDMDTSRTLYSISSSSPGSEAAGEAAAALAAASLVFKSVDSTYSSTLLNHAKTLFEFADKYRGSYQASCPFYCSYSGYQDELLWAAAWLYKATGDKIYINYVISNKDWSQAVNEFSWDNKFVGAQALLVSEFYNGANDLAKFKSDVESFVCAMMPGSSSQQIKPTPGGLLFIRDSSNLQYVTTATTVLFHYSKTLTKAGVGSIQCGSTKFTVSQIRNFAKSQVDYILGNNPMKMSYMVGFGTKYPTQPHHRGSSLPSIQSKPEKIDCNGGYSYYNSDTPNPNVHIGAIVGGPNSSDQYSDKKSDYSHAEPTTYINAAFIGPVAALISSSG</sequence>
<accession>Q9SUS0</accession>